<reference key="1">
    <citation type="journal article" date="2008" name="Appl. Environ. Microbiol.">
        <title>The genome sequence of the metal-mobilizing, extremely thermoacidophilic archaeon Metallosphaera sedula provides insights into bioleaching-associated metabolism.</title>
        <authorList>
            <person name="Auernik K.S."/>
            <person name="Maezato Y."/>
            <person name="Blum P.H."/>
            <person name="Kelly R.M."/>
        </authorList>
    </citation>
    <scope>NUCLEOTIDE SEQUENCE [LARGE SCALE GENOMIC DNA]</scope>
    <source>
        <strain>ATCC 51363 / DSM 5348 / JCM 9185 / NBRC 15509 / TH2</strain>
    </source>
</reference>
<dbReference type="EMBL" id="CP000682">
    <property type="protein sequence ID" value="ABP94186.1"/>
    <property type="molecule type" value="Genomic_DNA"/>
</dbReference>
<dbReference type="RefSeq" id="WP_011921155.1">
    <property type="nucleotide sequence ID" value="NZ_CP139956.1"/>
</dbReference>
<dbReference type="SMR" id="A4YCN4"/>
<dbReference type="STRING" id="399549.Msed_0009"/>
<dbReference type="GeneID" id="97614983"/>
<dbReference type="KEGG" id="mse:Msed_0009"/>
<dbReference type="eggNOG" id="arCOG00415">
    <property type="taxonomic scope" value="Archaea"/>
</dbReference>
<dbReference type="HOGENOM" id="CLU_041732_0_0_2"/>
<dbReference type="Proteomes" id="UP000000242">
    <property type="component" value="Chromosome"/>
</dbReference>
<dbReference type="GO" id="GO:0005524">
    <property type="term" value="F:ATP binding"/>
    <property type="evidence" value="ECO:0007669"/>
    <property type="project" value="UniProtKB-UniRule"/>
</dbReference>
<dbReference type="GO" id="GO:0016887">
    <property type="term" value="F:ATP hydrolysis activity"/>
    <property type="evidence" value="ECO:0007669"/>
    <property type="project" value="InterPro"/>
</dbReference>
<dbReference type="GO" id="GO:0140664">
    <property type="term" value="F:ATP-dependent DNA damage sensor activity"/>
    <property type="evidence" value="ECO:0007669"/>
    <property type="project" value="InterPro"/>
</dbReference>
<dbReference type="GO" id="GO:0003684">
    <property type="term" value="F:damaged DNA binding"/>
    <property type="evidence" value="ECO:0007669"/>
    <property type="project" value="UniProtKB-UniRule"/>
</dbReference>
<dbReference type="GO" id="GO:0006310">
    <property type="term" value="P:DNA recombination"/>
    <property type="evidence" value="ECO:0007669"/>
    <property type="project" value="UniProtKB-UniRule"/>
</dbReference>
<dbReference type="GO" id="GO:0006281">
    <property type="term" value="P:DNA repair"/>
    <property type="evidence" value="ECO:0007669"/>
    <property type="project" value="UniProtKB-UniRule"/>
</dbReference>
<dbReference type="CDD" id="cd19515">
    <property type="entry name" value="archRadA"/>
    <property type="match status" value="1"/>
</dbReference>
<dbReference type="FunFam" id="3.40.50.300:FF:002052">
    <property type="entry name" value="DNA repair protein RAD51 homolog"/>
    <property type="match status" value="1"/>
</dbReference>
<dbReference type="Gene3D" id="1.10.150.20">
    <property type="entry name" value="5' to 3' exonuclease, C-terminal subdomain"/>
    <property type="match status" value="1"/>
</dbReference>
<dbReference type="Gene3D" id="3.40.50.300">
    <property type="entry name" value="P-loop containing nucleotide triphosphate hydrolases"/>
    <property type="match status" value="1"/>
</dbReference>
<dbReference type="HAMAP" id="MF_00348">
    <property type="entry name" value="RadA_arch"/>
    <property type="match status" value="1"/>
</dbReference>
<dbReference type="InterPro" id="IPR003593">
    <property type="entry name" value="AAA+_ATPase"/>
</dbReference>
<dbReference type="InterPro" id="IPR013632">
    <property type="entry name" value="DNA_recomb/repair_Rad51_C"/>
</dbReference>
<dbReference type="InterPro" id="IPR011938">
    <property type="entry name" value="DNA_recomb/repair_RadA"/>
</dbReference>
<dbReference type="InterPro" id="IPR016467">
    <property type="entry name" value="DNA_recomb/repair_RecA-like"/>
</dbReference>
<dbReference type="InterPro" id="IPR010995">
    <property type="entry name" value="DNA_repair_Rad51/TF_NusA_a-hlx"/>
</dbReference>
<dbReference type="InterPro" id="IPR027417">
    <property type="entry name" value="P-loop_NTPase"/>
</dbReference>
<dbReference type="InterPro" id="IPR020588">
    <property type="entry name" value="RecA_ATP-bd"/>
</dbReference>
<dbReference type="InterPro" id="IPR020587">
    <property type="entry name" value="RecA_monomer-monomer_interface"/>
</dbReference>
<dbReference type="NCBIfam" id="NF003301">
    <property type="entry name" value="PRK04301.1"/>
    <property type="match status" value="1"/>
</dbReference>
<dbReference type="NCBIfam" id="TIGR02236">
    <property type="entry name" value="recomb_radA"/>
    <property type="match status" value="1"/>
</dbReference>
<dbReference type="PANTHER" id="PTHR22942:SF30">
    <property type="entry name" value="MEIOTIC RECOMBINATION PROTEIN DMC1_LIM15 HOMOLOG"/>
    <property type="match status" value="1"/>
</dbReference>
<dbReference type="PANTHER" id="PTHR22942">
    <property type="entry name" value="RECA/RAD51/RADA DNA STRAND-PAIRING FAMILY MEMBER"/>
    <property type="match status" value="1"/>
</dbReference>
<dbReference type="Pfam" id="PF14520">
    <property type="entry name" value="HHH_5"/>
    <property type="match status" value="1"/>
</dbReference>
<dbReference type="Pfam" id="PF08423">
    <property type="entry name" value="Rad51"/>
    <property type="match status" value="1"/>
</dbReference>
<dbReference type="PIRSF" id="PIRSF005856">
    <property type="entry name" value="Rad51"/>
    <property type="match status" value="1"/>
</dbReference>
<dbReference type="SMART" id="SM00382">
    <property type="entry name" value="AAA"/>
    <property type="match status" value="1"/>
</dbReference>
<dbReference type="SUPFAM" id="SSF52540">
    <property type="entry name" value="P-loop containing nucleoside triphosphate hydrolases"/>
    <property type="match status" value="1"/>
</dbReference>
<dbReference type="SUPFAM" id="SSF47794">
    <property type="entry name" value="Rad51 N-terminal domain-like"/>
    <property type="match status" value="1"/>
</dbReference>
<dbReference type="PROSITE" id="PS50162">
    <property type="entry name" value="RECA_2"/>
    <property type="match status" value="1"/>
</dbReference>
<dbReference type="PROSITE" id="PS50163">
    <property type="entry name" value="RECA_3"/>
    <property type="match status" value="1"/>
</dbReference>
<name>RADA_METS5</name>
<organism>
    <name type="scientific">Metallosphaera sedula (strain ATCC 51363 / DSM 5348 / JCM 9185 / NBRC 15509 / TH2)</name>
    <dbReference type="NCBI Taxonomy" id="399549"/>
    <lineage>
        <taxon>Archaea</taxon>
        <taxon>Thermoproteota</taxon>
        <taxon>Thermoprotei</taxon>
        <taxon>Sulfolobales</taxon>
        <taxon>Sulfolobaceae</taxon>
        <taxon>Metallosphaera</taxon>
    </lineage>
</organism>
<comment type="function">
    <text evidence="1">Involved in DNA repair and in homologous recombination. Binds and assemble on single-stranded DNA to form a nucleoprotein filament. Hydrolyzes ATP in a ssDNA-dependent manner and promotes DNA strand exchange between homologous DNA molecules.</text>
</comment>
<comment type="similarity">
    <text evidence="1">Belongs to the eukaryotic RecA-like protein family.</text>
</comment>
<feature type="chain" id="PRO_1000120512" description="DNA repair and recombination protein RadA">
    <location>
        <begin position="1"/>
        <end position="324"/>
    </location>
</feature>
<feature type="binding site" evidence="1">
    <location>
        <begin position="114"/>
        <end position="121"/>
    </location>
    <ligand>
        <name>ATP</name>
        <dbReference type="ChEBI" id="CHEBI:30616"/>
    </ligand>
</feature>
<accession>A4YCN4</accession>
<protein>
    <recommendedName>
        <fullName evidence="1">DNA repair and recombination protein RadA</fullName>
    </recommendedName>
</protein>
<proteinExistence type="inferred from homology"/>
<sequence>MADQVEEKKRIKTVKDLSGVGQAVLNKLTEAGYSTLESIAVASPQDLSTAAGIPITTAQRIIKEARDALDIRFKTALEIEQERASVKKITTGSQALDGLLGGGIETRTMTELFGEFGSGKTQICHQVSVNVQLPPERGGLSGKALYIDTEGTFRTERIKAMASALGLEPKEVLQNIMSIRAINTDHQIAIVEELQDIIAKDNSIKLVVVDSITSHFRAEYSGRENLAVRQQKLNRHLHQLVRLAEIYDLAVIVTNQVMARPDMFYGDPTVAVGGHTLYHVPGIRVQIKKSRGNRRIARMVDAPHLPEGEVVFSITNTGIRDAEE</sequence>
<keyword id="KW-0067">ATP-binding</keyword>
<keyword id="KW-0227">DNA damage</keyword>
<keyword id="KW-0233">DNA recombination</keyword>
<keyword id="KW-0238">DNA-binding</keyword>
<keyword id="KW-0547">Nucleotide-binding</keyword>
<keyword id="KW-1185">Reference proteome</keyword>
<gene>
    <name evidence="1" type="primary">radA</name>
    <name type="ordered locus">Msed_0009</name>
</gene>
<evidence type="ECO:0000255" key="1">
    <source>
        <dbReference type="HAMAP-Rule" id="MF_00348"/>
    </source>
</evidence>